<reference key="1">
    <citation type="journal article" date="1994" name="Proc. Natl. Acad. Sci. U.S.A.">
        <title>Loss of all ndh genes as determined by sequencing the entire chloroplast genome of the black pine Pinus thunbergii.</title>
        <authorList>
            <person name="Wakasugi T."/>
            <person name="Tsudzuki J."/>
            <person name="Ito S."/>
            <person name="Nakashima K."/>
            <person name="Tsudzuki T."/>
            <person name="Sugiura M."/>
        </authorList>
    </citation>
    <scope>NUCLEOTIDE SEQUENCE [LARGE SCALE GENOMIC DNA]</scope>
</reference>
<feature type="chain" id="PRO_0000061815" description="Cytochrome b6">
    <location>
        <begin position="1"/>
        <end position="215"/>
    </location>
</feature>
<feature type="transmembrane region" description="Helical" evidence="1">
    <location>
        <begin position="32"/>
        <end position="52"/>
    </location>
</feature>
<feature type="transmembrane region" description="Helical" evidence="1">
    <location>
        <begin position="90"/>
        <end position="110"/>
    </location>
</feature>
<feature type="transmembrane region" description="Helical" evidence="1">
    <location>
        <begin position="116"/>
        <end position="136"/>
    </location>
</feature>
<feature type="transmembrane region" description="Helical" evidence="1">
    <location>
        <begin position="186"/>
        <end position="206"/>
    </location>
</feature>
<feature type="binding site" description="covalent" evidence="1">
    <location>
        <position position="35"/>
    </location>
    <ligand>
        <name>heme c</name>
        <dbReference type="ChEBI" id="CHEBI:61717"/>
    </ligand>
</feature>
<feature type="binding site" description="axial binding residue" evidence="1">
    <location>
        <position position="86"/>
    </location>
    <ligand>
        <name>heme b</name>
        <dbReference type="ChEBI" id="CHEBI:60344"/>
        <label>2</label>
    </ligand>
    <ligandPart>
        <name>Fe</name>
        <dbReference type="ChEBI" id="CHEBI:18248"/>
    </ligandPart>
</feature>
<feature type="binding site" description="axial binding residue" evidence="1">
    <location>
        <position position="100"/>
    </location>
    <ligand>
        <name>heme b</name>
        <dbReference type="ChEBI" id="CHEBI:60344"/>
        <label>1</label>
    </ligand>
    <ligandPart>
        <name>Fe</name>
        <dbReference type="ChEBI" id="CHEBI:18248"/>
    </ligandPart>
</feature>
<feature type="binding site" description="axial binding residue" evidence="1">
    <location>
        <position position="187"/>
    </location>
    <ligand>
        <name>heme b</name>
        <dbReference type="ChEBI" id="CHEBI:60344"/>
        <label>2</label>
    </ligand>
    <ligandPart>
        <name>Fe</name>
        <dbReference type="ChEBI" id="CHEBI:18248"/>
    </ligandPart>
</feature>
<feature type="binding site" description="axial binding residue" evidence="1">
    <location>
        <position position="202"/>
    </location>
    <ligand>
        <name>heme b</name>
        <dbReference type="ChEBI" id="CHEBI:60344"/>
        <label>1</label>
    </ligand>
    <ligandPart>
        <name>Fe</name>
        <dbReference type="ChEBI" id="CHEBI:18248"/>
    </ligandPart>
</feature>
<organism>
    <name type="scientific">Pinus thunbergii</name>
    <name type="common">Japanese black pine</name>
    <name type="synonym">Pinus thunbergiana</name>
    <dbReference type="NCBI Taxonomy" id="3350"/>
    <lineage>
        <taxon>Eukaryota</taxon>
        <taxon>Viridiplantae</taxon>
        <taxon>Streptophyta</taxon>
        <taxon>Embryophyta</taxon>
        <taxon>Tracheophyta</taxon>
        <taxon>Spermatophyta</taxon>
        <taxon>Pinopsida</taxon>
        <taxon>Pinidae</taxon>
        <taxon>Conifers I</taxon>
        <taxon>Pinales</taxon>
        <taxon>Pinaceae</taxon>
        <taxon>Pinus</taxon>
        <taxon>Pinus subgen. Pinus</taxon>
    </lineage>
</organism>
<gene>
    <name evidence="1" type="primary">petB</name>
</gene>
<geneLocation type="chloroplast"/>
<keyword id="KW-0150">Chloroplast</keyword>
<keyword id="KW-0249">Electron transport</keyword>
<keyword id="KW-0349">Heme</keyword>
<keyword id="KW-0408">Iron</keyword>
<keyword id="KW-0472">Membrane</keyword>
<keyword id="KW-0479">Metal-binding</keyword>
<keyword id="KW-0602">Photosynthesis</keyword>
<keyword id="KW-0934">Plastid</keyword>
<keyword id="KW-0793">Thylakoid</keyword>
<keyword id="KW-0812">Transmembrane</keyword>
<keyword id="KW-1133">Transmembrane helix</keyword>
<keyword id="KW-0813">Transport</keyword>
<protein>
    <recommendedName>
        <fullName evidence="1">Cytochrome b6</fullName>
    </recommendedName>
</protein>
<sequence length="215" mass="24241">MGKVYDRFEERLEIQAIADDITSKYVPPHVNIFYCLGGITLTCFLVQVATGFAMTFYYRPTVTEAFASVQYLMTEVNFGWLIRSIHRWSASMMVLMMILHVFRVYLTGGFKKPRELTWVTGVILAVLTVSFGVTGYSLPWDQIGYWAVKIVTGVPEAIPVIGSPLVELLRGSVSVGQSTLTRFYSLHTFILPLLTAVFMPMHFLMIRKQGIPGPL</sequence>
<proteinExistence type="inferred from homology"/>
<accession>P41628</accession>
<dbReference type="EMBL" id="D17510">
    <property type="protein sequence ID" value="BAA04390.1"/>
    <property type="molecule type" value="Genomic_DNA"/>
</dbReference>
<dbReference type="PIR" id="T07512">
    <property type="entry name" value="T07512"/>
</dbReference>
<dbReference type="RefSeq" id="NP_042433.1">
    <property type="nucleotide sequence ID" value="NC_001631.1"/>
</dbReference>
<dbReference type="SMR" id="P41628"/>
<dbReference type="GeneID" id="809004"/>
<dbReference type="GO" id="GO:0009535">
    <property type="term" value="C:chloroplast thylakoid membrane"/>
    <property type="evidence" value="ECO:0007669"/>
    <property type="project" value="UniProtKB-SubCell"/>
</dbReference>
<dbReference type="GO" id="GO:0045158">
    <property type="term" value="F:electron transporter, transferring electrons within cytochrome b6/f complex of photosystem II activity"/>
    <property type="evidence" value="ECO:0007669"/>
    <property type="project" value="UniProtKB-UniRule"/>
</dbReference>
<dbReference type="GO" id="GO:0046872">
    <property type="term" value="F:metal ion binding"/>
    <property type="evidence" value="ECO:0007669"/>
    <property type="project" value="UniProtKB-KW"/>
</dbReference>
<dbReference type="GO" id="GO:0016491">
    <property type="term" value="F:oxidoreductase activity"/>
    <property type="evidence" value="ECO:0007669"/>
    <property type="project" value="InterPro"/>
</dbReference>
<dbReference type="GO" id="GO:0015979">
    <property type="term" value="P:photosynthesis"/>
    <property type="evidence" value="ECO:0007669"/>
    <property type="project" value="UniProtKB-UniRule"/>
</dbReference>
<dbReference type="GO" id="GO:0022904">
    <property type="term" value="P:respiratory electron transport chain"/>
    <property type="evidence" value="ECO:0007669"/>
    <property type="project" value="InterPro"/>
</dbReference>
<dbReference type="CDD" id="cd00284">
    <property type="entry name" value="Cytochrome_b_N"/>
    <property type="match status" value="1"/>
</dbReference>
<dbReference type="FunFam" id="1.20.810.10:FF:000001">
    <property type="entry name" value="Cytochrome b6"/>
    <property type="match status" value="1"/>
</dbReference>
<dbReference type="Gene3D" id="1.20.810.10">
    <property type="entry name" value="Cytochrome Bc1 Complex, Chain C"/>
    <property type="match status" value="1"/>
</dbReference>
<dbReference type="HAMAP" id="MF_00633">
    <property type="entry name" value="Cytb6_f_cytb6"/>
    <property type="match status" value="1"/>
</dbReference>
<dbReference type="InterPro" id="IPR005797">
    <property type="entry name" value="Cyt_b/b6_N"/>
</dbReference>
<dbReference type="InterPro" id="IPR023530">
    <property type="entry name" value="Cyt_B6_PetB"/>
</dbReference>
<dbReference type="InterPro" id="IPR027387">
    <property type="entry name" value="Cytb/b6-like_sf"/>
</dbReference>
<dbReference type="InterPro" id="IPR048259">
    <property type="entry name" value="Cytochrome_b_N_euk/bac"/>
</dbReference>
<dbReference type="InterPro" id="IPR016174">
    <property type="entry name" value="Di-haem_cyt_TM"/>
</dbReference>
<dbReference type="NCBIfam" id="NF002990">
    <property type="entry name" value="PRK03735.1"/>
    <property type="match status" value="1"/>
</dbReference>
<dbReference type="PANTHER" id="PTHR19271">
    <property type="entry name" value="CYTOCHROME B"/>
    <property type="match status" value="1"/>
</dbReference>
<dbReference type="PANTHER" id="PTHR19271:SF16">
    <property type="entry name" value="CYTOCHROME B"/>
    <property type="match status" value="1"/>
</dbReference>
<dbReference type="Pfam" id="PF00033">
    <property type="entry name" value="Cytochrome_B"/>
    <property type="match status" value="1"/>
</dbReference>
<dbReference type="PIRSF" id="PIRSF000032">
    <property type="entry name" value="Cytochrome_b6"/>
    <property type="match status" value="1"/>
</dbReference>
<dbReference type="SUPFAM" id="SSF81342">
    <property type="entry name" value="Transmembrane di-heme cytochromes"/>
    <property type="match status" value="1"/>
</dbReference>
<dbReference type="PROSITE" id="PS51002">
    <property type="entry name" value="CYTB_NTER"/>
    <property type="match status" value="1"/>
</dbReference>
<comment type="function">
    <text evidence="1">Component of the cytochrome b6-f complex, which mediates electron transfer between photosystem II (PSII) and photosystem I (PSI), cyclic electron flow around PSI, and state transitions.</text>
</comment>
<comment type="cofactor">
    <cofactor evidence="1">
        <name>heme b</name>
        <dbReference type="ChEBI" id="CHEBI:60344"/>
    </cofactor>
    <text evidence="1">Binds 2 heme b groups non-covalently with two histidine residues as axial ligands.</text>
</comment>
<comment type="cofactor">
    <cofactor evidence="1">
        <name>heme c</name>
        <dbReference type="ChEBI" id="CHEBI:61717"/>
    </cofactor>
    <text evidence="1">Binds one heme group covalently by a single cysteine link with no axial amino acid ligand. This heme was named heme ci.</text>
</comment>
<comment type="subunit">
    <text evidence="1">The 4 large subunits of the cytochrome b6-f complex are cytochrome b6, subunit IV (17 kDa polypeptide, PetD), cytochrome f and the Rieske protein, while the 4 small subunits are PetG, PetL, PetM and PetN. The complex functions as a dimer.</text>
</comment>
<comment type="subcellular location">
    <subcellularLocation>
        <location evidence="1">Plastid</location>
        <location evidence="1">Chloroplast thylakoid membrane</location>
        <topology evidence="1">Multi-pass membrane protein</topology>
    </subcellularLocation>
</comment>
<comment type="miscellaneous">
    <text evidence="1">Heme 1 (or BH or b566) is high-potential and absorbs at about 566 nm, and heme 2 (or BL or b562) is low-potential and absorbs at about 562 nm.</text>
</comment>
<comment type="similarity">
    <text evidence="1">Belongs to the cytochrome b family. PetB subfamily.</text>
</comment>
<evidence type="ECO:0000255" key="1">
    <source>
        <dbReference type="HAMAP-Rule" id="MF_00633"/>
    </source>
</evidence>
<name>CYB6_PINTH</name>